<evidence type="ECO:0000250" key="1">
    <source>
        <dbReference type="UniProtKB" id="Q04744"/>
    </source>
</evidence>
<evidence type="ECO:0000255" key="2">
    <source>
        <dbReference type="PROSITE-ProRule" id="PRU00108"/>
    </source>
</evidence>
<evidence type="ECO:0000256" key="3">
    <source>
        <dbReference type="SAM" id="MobiDB-lite"/>
    </source>
</evidence>
<evidence type="ECO:0000305" key="4"/>
<reference key="1">
    <citation type="submission" date="2006-06" db="EMBL/GenBank/DDBJ databases">
        <authorList>
            <consortium name="NIH - Mammalian Gene Collection (MGC) project"/>
        </authorList>
    </citation>
    <scope>NUCLEOTIDE SEQUENCE [LARGE SCALE MRNA]</scope>
    <source>
        <strain>Hereford</strain>
        <tissue>Uterus</tissue>
    </source>
</reference>
<proteinExistence type="evidence at transcript level"/>
<comment type="function">
    <text evidence="1">Transcription factor, which in cooperation with EMX1, acts to generate the boundary between the roof and archipallium in the developing brain. May function in combination with OTX1/2 to specify cell fates in the developing central nervous system. In the inner ear, it controls the distribution of GPR156 at hair cell boundaries, and regulates the organization of stereociliary bundles in opposite orientations across the line of polarity reversal (LPR).</text>
</comment>
<comment type="subunit">
    <text evidence="1">Interacts with translation initiation factor EIF4E.</text>
</comment>
<comment type="subcellular location">
    <subcellularLocation>
        <location evidence="1">Nucleus</location>
    </subcellularLocation>
    <subcellularLocation>
        <location evidence="1">Cell projection</location>
        <location evidence="1">Axon</location>
    </subcellularLocation>
    <text evidence="1">Detected in axons within the olfactory mucosa and glomeruli in the olfactory bulb.</text>
</comment>
<comment type="similarity">
    <text evidence="4">Belongs to the EMX homeobox family.</text>
</comment>
<dbReference type="EMBL" id="BC118094">
    <property type="protein sequence ID" value="AAI18095.1"/>
    <property type="molecule type" value="mRNA"/>
</dbReference>
<dbReference type="RefSeq" id="NP_001069313.1">
    <property type="nucleotide sequence ID" value="NM_001075845.1"/>
</dbReference>
<dbReference type="SMR" id="Q17R00"/>
<dbReference type="FunCoup" id="Q17R00">
    <property type="interactions" value="230"/>
</dbReference>
<dbReference type="STRING" id="9913.ENSBTAP00000003937"/>
<dbReference type="PaxDb" id="9913-ENSBTAP00000003937"/>
<dbReference type="Ensembl" id="ENSBTAT00000003937.5">
    <property type="protein sequence ID" value="ENSBTAP00000003937.4"/>
    <property type="gene ID" value="ENSBTAG00000003027.5"/>
</dbReference>
<dbReference type="GeneID" id="523601"/>
<dbReference type="KEGG" id="bta:523601"/>
<dbReference type="CTD" id="2018"/>
<dbReference type="VEuPathDB" id="HostDB:ENSBTAG00000003027"/>
<dbReference type="VGNC" id="VGNC:28486">
    <property type="gene designation" value="EMX2"/>
</dbReference>
<dbReference type="eggNOG" id="KOG0843">
    <property type="taxonomic scope" value="Eukaryota"/>
</dbReference>
<dbReference type="GeneTree" id="ENSGT00940000157425"/>
<dbReference type="HOGENOM" id="CLU_049668_1_0_1"/>
<dbReference type="InParanoid" id="Q17R00"/>
<dbReference type="OMA" id="RWRMETQ"/>
<dbReference type="OrthoDB" id="6159439at2759"/>
<dbReference type="TreeFam" id="TF317015"/>
<dbReference type="Proteomes" id="UP000009136">
    <property type="component" value="Chromosome 26"/>
</dbReference>
<dbReference type="Bgee" id="ENSBTAG00000003027">
    <property type="expression patterns" value="Expressed in mammary gland fat and 78 other cell types or tissues"/>
</dbReference>
<dbReference type="GO" id="GO:0030424">
    <property type="term" value="C:axon"/>
    <property type="evidence" value="ECO:0007669"/>
    <property type="project" value="UniProtKB-SubCell"/>
</dbReference>
<dbReference type="GO" id="GO:0005634">
    <property type="term" value="C:nucleus"/>
    <property type="evidence" value="ECO:0000318"/>
    <property type="project" value="GO_Central"/>
</dbReference>
<dbReference type="GO" id="GO:0000981">
    <property type="term" value="F:DNA-binding transcription factor activity, RNA polymerase II-specific"/>
    <property type="evidence" value="ECO:0000318"/>
    <property type="project" value="GO_Central"/>
</dbReference>
<dbReference type="GO" id="GO:0000978">
    <property type="term" value="F:RNA polymerase II cis-regulatory region sequence-specific DNA binding"/>
    <property type="evidence" value="ECO:0000318"/>
    <property type="project" value="GO_Central"/>
</dbReference>
<dbReference type="GO" id="GO:0009952">
    <property type="term" value="P:anterior/posterior pattern specification"/>
    <property type="evidence" value="ECO:0007669"/>
    <property type="project" value="Ensembl"/>
</dbReference>
<dbReference type="GO" id="GO:0007420">
    <property type="term" value="P:brain development"/>
    <property type="evidence" value="ECO:0000318"/>
    <property type="project" value="GO_Central"/>
</dbReference>
<dbReference type="GO" id="GO:0021846">
    <property type="term" value="P:cell proliferation in forebrain"/>
    <property type="evidence" value="ECO:0007669"/>
    <property type="project" value="Ensembl"/>
</dbReference>
<dbReference type="GO" id="GO:0007417">
    <property type="term" value="P:central nervous system development"/>
    <property type="evidence" value="ECO:0000318"/>
    <property type="project" value="GO_Central"/>
</dbReference>
<dbReference type="GO" id="GO:0021796">
    <property type="term" value="P:cerebral cortex regionalization"/>
    <property type="evidence" value="ECO:0007669"/>
    <property type="project" value="Ensembl"/>
</dbReference>
<dbReference type="GO" id="GO:0021542">
    <property type="term" value="P:dentate gyrus development"/>
    <property type="evidence" value="ECO:0007669"/>
    <property type="project" value="Ensembl"/>
</dbReference>
<dbReference type="GO" id="GO:0021885">
    <property type="term" value="P:forebrain cell migration"/>
    <property type="evidence" value="ECO:0007669"/>
    <property type="project" value="Ensembl"/>
</dbReference>
<dbReference type="GO" id="GO:0030182">
    <property type="term" value="P:neuron differentiation"/>
    <property type="evidence" value="ECO:0000318"/>
    <property type="project" value="GO_Central"/>
</dbReference>
<dbReference type="GO" id="GO:0001764">
    <property type="term" value="P:neuron migration"/>
    <property type="evidence" value="ECO:0007669"/>
    <property type="project" value="Ensembl"/>
</dbReference>
<dbReference type="GO" id="GO:0006357">
    <property type="term" value="P:regulation of transcription by RNA polymerase II"/>
    <property type="evidence" value="ECO:0000318"/>
    <property type="project" value="GO_Central"/>
</dbReference>
<dbReference type="GO" id="GO:0009410">
    <property type="term" value="P:response to xenobiotic stimulus"/>
    <property type="evidence" value="ECO:0007669"/>
    <property type="project" value="Ensembl"/>
</dbReference>
<dbReference type="GO" id="GO:0160194">
    <property type="term" value="P:stereocilium bundle organization"/>
    <property type="evidence" value="ECO:0000250"/>
    <property type="project" value="UniProtKB"/>
</dbReference>
<dbReference type="GO" id="GO:0072197">
    <property type="term" value="P:ureter morphogenesis"/>
    <property type="evidence" value="ECO:0007669"/>
    <property type="project" value="Ensembl"/>
</dbReference>
<dbReference type="CDD" id="cd00086">
    <property type="entry name" value="homeodomain"/>
    <property type="match status" value="1"/>
</dbReference>
<dbReference type="FunFam" id="1.10.10.60:FF:000299">
    <property type="entry name" value="Empty spiracles homeobox 3"/>
    <property type="match status" value="1"/>
</dbReference>
<dbReference type="Gene3D" id="1.10.10.60">
    <property type="entry name" value="Homeodomain-like"/>
    <property type="match status" value="1"/>
</dbReference>
<dbReference type="InterPro" id="IPR050877">
    <property type="entry name" value="EMX-VAX-Noto_Homeobox_TFs"/>
</dbReference>
<dbReference type="InterPro" id="IPR001356">
    <property type="entry name" value="HD"/>
</dbReference>
<dbReference type="InterPro" id="IPR020479">
    <property type="entry name" value="HD_metazoa"/>
</dbReference>
<dbReference type="InterPro" id="IPR017970">
    <property type="entry name" value="Homeobox_CS"/>
</dbReference>
<dbReference type="InterPro" id="IPR009057">
    <property type="entry name" value="Homeodomain-like_sf"/>
</dbReference>
<dbReference type="InterPro" id="IPR000047">
    <property type="entry name" value="HTH_motif"/>
</dbReference>
<dbReference type="PANTHER" id="PTHR24339">
    <property type="entry name" value="HOMEOBOX PROTEIN EMX-RELATED"/>
    <property type="match status" value="1"/>
</dbReference>
<dbReference type="PANTHER" id="PTHR24339:SF25">
    <property type="entry name" value="HOMEOBOX PROTEIN EMX2"/>
    <property type="match status" value="1"/>
</dbReference>
<dbReference type="Pfam" id="PF00046">
    <property type="entry name" value="Homeodomain"/>
    <property type="match status" value="1"/>
</dbReference>
<dbReference type="PRINTS" id="PR00024">
    <property type="entry name" value="HOMEOBOX"/>
</dbReference>
<dbReference type="PRINTS" id="PR00031">
    <property type="entry name" value="HTHREPRESSR"/>
</dbReference>
<dbReference type="SMART" id="SM00389">
    <property type="entry name" value="HOX"/>
    <property type="match status" value="1"/>
</dbReference>
<dbReference type="SUPFAM" id="SSF46689">
    <property type="entry name" value="Homeodomain-like"/>
    <property type="match status" value="1"/>
</dbReference>
<dbReference type="PROSITE" id="PS00027">
    <property type="entry name" value="HOMEOBOX_1"/>
    <property type="match status" value="1"/>
</dbReference>
<dbReference type="PROSITE" id="PS50071">
    <property type="entry name" value="HOMEOBOX_2"/>
    <property type="match status" value="1"/>
</dbReference>
<keyword id="KW-0966">Cell projection</keyword>
<keyword id="KW-0217">Developmental protein</keyword>
<keyword id="KW-0238">DNA-binding</keyword>
<keyword id="KW-0371">Homeobox</keyword>
<keyword id="KW-0539">Nucleus</keyword>
<keyword id="KW-1185">Reference proteome</keyword>
<name>EMX2_BOVIN</name>
<sequence length="253" mass="28344">MFQPAPKRCFTIESLVAKDSPLPASRSEDPIRPAALSYANSSPINPFLNGFHSAAAAAAAGRGVYSNPDLVFAEAVSHPPNPAVPVHPVPPPHALAAHPLPSSHSPHPLFASQQRDPSTFYPWLIHRYRYLGHRFQGNDASPESFLLHNALARKPKRIRTAFSPSQLLRLEHAFEKNHYVVGAERKQLAHSLSLTETQVKVWFQNRRTKFKRQKLEEEGSDSQQKKKGTHHINRWRIATKQASPEEIDVTSDD</sequence>
<protein>
    <recommendedName>
        <fullName>Homeobox protein EMX2</fullName>
    </recommendedName>
    <alternativeName>
        <fullName>Empty spiracles homolog 2</fullName>
    </alternativeName>
    <alternativeName>
        <fullName>Empty spiracles-like protein 2</fullName>
    </alternativeName>
</protein>
<accession>Q17R00</accession>
<gene>
    <name type="primary">EMX2</name>
</gene>
<organism>
    <name type="scientific">Bos taurus</name>
    <name type="common">Bovine</name>
    <dbReference type="NCBI Taxonomy" id="9913"/>
    <lineage>
        <taxon>Eukaryota</taxon>
        <taxon>Metazoa</taxon>
        <taxon>Chordata</taxon>
        <taxon>Craniata</taxon>
        <taxon>Vertebrata</taxon>
        <taxon>Euteleostomi</taxon>
        <taxon>Mammalia</taxon>
        <taxon>Eutheria</taxon>
        <taxon>Laurasiatheria</taxon>
        <taxon>Artiodactyla</taxon>
        <taxon>Ruminantia</taxon>
        <taxon>Pecora</taxon>
        <taxon>Bovidae</taxon>
        <taxon>Bovinae</taxon>
        <taxon>Bos</taxon>
    </lineage>
</organism>
<feature type="chain" id="PRO_0000285082" description="Homeobox protein EMX2">
    <location>
        <begin position="1"/>
        <end position="253"/>
    </location>
</feature>
<feature type="DNA-binding region" description="Homeobox" evidence="2">
    <location>
        <begin position="155"/>
        <end position="214"/>
    </location>
</feature>
<feature type="region of interest" description="Disordered" evidence="3">
    <location>
        <begin position="213"/>
        <end position="253"/>
    </location>
</feature>
<feature type="compositionally biased region" description="Basic residues" evidence="3">
    <location>
        <begin position="225"/>
        <end position="234"/>
    </location>
</feature>